<gene>
    <name evidence="1" type="primary">mtaD2</name>
    <name type="ordered locus">AF_0997</name>
</gene>
<reference key="1">
    <citation type="journal article" date="1997" name="Nature">
        <title>The complete genome sequence of the hyperthermophilic, sulphate-reducing archaeon Archaeoglobus fulgidus.</title>
        <authorList>
            <person name="Klenk H.-P."/>
            <person name="Clayton R.A."/>
            <person name="Tomb J.-F."/>
            <person name="White O."/>
            <person name="Nelson K.E."/>
            <person name="Ketchum K.A."/>
            <person name="Dodson R.J."/>
            <person name="Gwinn M.L."/>
            <person name="Hickey E.K."/>
            <person name="Peterson J.D."/>
            <person name="Richardson D.L."/>
            <person name="Kerlavage A.R."/>
            <person name="Graham D.E."/>
            <person name="Kyrpides N.C."/>
            <person name="Fleischmann R.D."/>
            <person name="Quackenbush J."/>
            <person name="Lee N.H."/>
            <person name="Sutton G.G."/>
            <person name="Gill S.R."/>
            <person name="Kirkness E.F."/>
            <person name="Dougherty B.A."/>
            <person name="McKenney K."/>
            <person name="Adams M.D."/>
            <person name="Loftus B.J."/>
            <person name="Peterson S.N."/>
            <person name="Reich C.I."/>
            <person name="McNeil L.K."/>
            <person name="Badger J.H."/>
            <person name="Glodek A."/>
            <person name="Zhou L."/>
            <person name="Overbeek R."/>
            <person name="Gocayne J.D."/>
            <person name="Weidman J.F."/>
            <person name="McDonald L.A."/>
            <person name="Utterback T.R."/>
            <person name="Cotton M.D."/>
            <person name="Spriggs T."/>
            <person name="Artiach P."/>
            <person name="Kaine B.P."/>
            <person name="Sykes S.M."/>
            <person name="Sadow P.W."/>
            <person name="D'Andrea K.P."/>
            <person name="Bowman C."/>
            <person name="Fujii C."/>
            <person name="Garland S.A."/>
            <person name="Mason T.M."/>
            <person name="Olsen G.J."/>
            <person name="Fraser C.M."/>
            <person name="Smith H.O."/>
            <person name="Woese C.R."/>
            <person name="Venter J.C."/>
        </authorList>
    </citation>
    <scope>NUCLEOTIDE SEQUENCE [LARGE SCALE GENOMIC DNA]</scope>
    <source>
        <strain>ATCC 49558 / DSM 4304 / JCM 9628 / NBRC 100126 / VC-16</strain>
    </source>
</reference>
<comment type="function">
    <text evidence="1">Catalyzes the deamination of 5-methylthioadenosine and S-adenosyl-L-homocysteine into 5-methylthioinosine and S-inosyl-L-homocysteine, respectively. Is also able to deaminate adenosine.</text>
</comment>
<comment type="catalytic activity">
    <reaction evidence="1">
        <text>S-adenosyl-L-homocysteine + H2O + H(+) = S-inosyl-L-homocysteine + NH4(+)</text>
        <dbReference type="Rhea" id="RHEA:20716"/>
        <dbReference type="ChEBI" id="CHEBI:15377"/>
        <dbReference type="ChEBI" id="CHEBI:15378"/>
        <dbReference type="ChEBI" id="CHEBI:28938"/>
        <dbReference type="ChEBI" id="CHEBI:57856"/>
        <dbReference type="ChEBI" id="CHEBI:57985"/>
        <dbReference type="EC" id="3.5.4.28"/>
    </reaction>
</comment>
<comment type="catalytic activity">
    <reaction evidence="1">
        <text>S-methyl-5'-thioadenosine + H2O + H(+) = S-methyl-5'-thioinosine + NH4(+)</text>
        <dbReference type="Rhea" id="RHEA:25025"/>
        <dbReference type="ChEBI" id="CHEBI:15377"/>
        <dbReference type="ChEBI" id="CHEBI:15378"/>
        <dbReference type="ChEBI" id="CHEBI:17509"/>
        <dbReference type="ChEBI" id="CHEBI:28938"/>
        <dbReference type="ChEBI" id="CHEBI:48595"/>
        <dbReference type="EC" id="3.5.4.31"/>
    </reaction>
</comment>
<comment type="cofactor">
    <cofactor evidence="1">
        <name>Zn(2+)</name>
        <dbReference type="ChEBI" id="CHEBI:29105"/>
    </cofactor>
    <text evidence="1">Binds 1 zinc ion per subunit.</text>
</comment>
<comment type="similarity">
    <text evidence="1">Belongs to the metallo-dependent hydrolases superfamily. MTA/SAH deaminase family.</text>
</comment>
<organism>
    <name type="scientific">Archaeoglobus fulgidus (strain ATCC 49558 / DSM 4304 / JCM 9628 / NBRC 100126 / VC-16)</name>
    <dbReference type="NCBI Taxonomy" id="224325"/>
    <lineage>
        <taxon>Archaea</taxon>
        <taxon>Methanobacteriati</taxon>
        <taxon>Methanobacteriota</taxon>
        <taxon>Archaeoglobi</taxon>
        <taxon>Archaeoglobales</taxon>
        <taxon>Archaeoglobaceae</taxon>
        <taxon>Archaeoglobus</taxon>
    </lineage>
</organism>
<dbReference type="EC" id="3.5.4.28" evidence="1"/>
<dbReference type="EC" id="3.5.4.31" evidence="1"/>
<dbReference type="EMBL" id="AE000782">
    <property type="protein sequence ID" value="AAB90244.1"/>
    <property type="molecule type" value="Genomic_DNA"/>
</dbReference>
<dbReference type="PIR" id="E69374">
    <property type="entry name" value="E69374"/>
</dbReference>
<dbReference type="RefSeq" id="WP_010878497.1">
    <property type="nucleotide sequence ID" value="NC_000917.1"/>
</dbReference>
<dbReference type="SMR" id="O29265"/>
<dbReference type="STRING" id="224325.AF_0997"/>
<dbReference type="PaxDb" id="224325-AF_0997"/>
<dbReference type="EnsemblBacteria" id="AAB90244">
    <property type="protein sequence ID" value="AAB90244"/>
    <property type="gene ID" value="AF_0997"/>
</dbReference>
<dbReference type="KEGG" id="afu:AF_0997"/>
<dbReference type="eggNOG" id="arCOG00695">
    <property type="taxonomic scope" value="Archaea"/>
</dbReference>
<dbReference type="HOGENOM" id="CLU_012358_2_1_2"/>
<dbReference type="OrthoDB" id="372084at2157"/>
<dbReference type="PhylomeDB" id="O29265"/>
<dbReference type="Proteomes" id="UP000002199">
    <property type="component" value="Chromosome"/>
</dbReference>
<dbReference type="GO" id="GO:0090614">
    <property type="term" value="F:5'-methylthioadenosine deaminase activity"/>
    <property type="evidence" value="ECO:0007669"/>
    <property type="project" value="UniProtKB-UniRule"/>
</dbReference>
<dbReference type="GO" id="GO:0046872">
    <property type="term" value="F:metal ion binding"/>
    <property type="evidence" value="ECO:0007669"/>
    <property type="project" value="UniProtKB-KW"/>
</dbReference>
<dbReference type="GO" id="GO:0050270">
    <property type="term" value="F:S-adenosylhomocysteine deaminase activity"/>
    <property type="evidence" value="ECO:0007669"/>
    <property type="project" value="UniProtKB-UniRule"/>
</dbReference>
<dbReference type="CDD" id="cd01298">
    <property type="entry name" value="ATZ_TRZ_like"/>
    <property type="match status" value="1"/>
</dbReference>
<dbReference type="FunFam" id="3.20.20.140:FF:000014">
    <property type="entry name" value="5-methylthioadenosine/S-adenosylhomocysteine deaminase"/>
    <property type="match status" value="1"/>
</dbReference>
<dbReference type="Gene3D" id="3.20.20.140">
    <property type="entry name" value="Metal-dependent hydrolases"/>
    <property type="match status" value="1"/>
</dbReference>
<dbReference type="Gene3D" id="2.30.40.10">
    <property type="entry name" value="Urease, subunit C, domain 1"/>
    <property type="match status" value="1"/>
</dbReference>
<dbReference type="HAMAP" id="MF_01281">
    <property type="entry name" value="MTA_SAH_deamin"/>
    <property type="match status" value="1"/>
</dbReference>
<dbReference type="InterPro" id="IPR006680">
    <property type="entry name" value="Amidohydro-rel"/>
</dbReference>
<dbReference type="InterPro" id="IPR023512">
    <property type="entry name" value="Deaminase_MtaD/DadD"/>
</dbReference>
<dbReference type="InterPro" id="IPR011059">
    <property type="entry name" value="Metal-dep_hydrolase_composite"/>
</dbReference>
<dbReference type="InterPro" id="IPR032466">
    <property type="entry name" value="Metal_Hydrolase"/>
</dbReference>
<dbReference type="InterPro" id="IPR050287">
    <property type="entry name" value="MTA/SAH_deaminase"/>
</dbReference>
<dbReference type="PANTHER" id="PTHR43794:SF11">
    <property type="entry name" value="AMIDOHYDROLASE-RELATED DOMAIN-CONTAINING PROTEIN"/>
    <property type="match status" value="1"/>
</dbReference>
<dbReference type="PANTHER" id="PTHR43794">
    <property type="entry name" value="AMINOHYDROLASE SSNA-RELATED"/>
    <property type="match status" value="1"/>
</dbReference>
<dbReference type="Pfam" id="PF01979">
    <property type="entry name" value="Amidohydro_1"/>
    <property type="match status" value="1"/>
</dbReference>
<dbReference type="SUPFAM" id="SSF51338">
    <property type="entry name" value="Composite domain of metallo-dependent hydrolases"/>
    <property type="match status" value="1"/>
</dbReference>
<dbReference type="SUPFAM" id="SSF51556">
    <property type="entry name" value="Metallo-dependent hydrolases"/>
    <property type="match status" value="1"/>
</dbReference>
<name>MTAD2_ARCFU</name>
<proteinExistence type="inferred from homology"/>
<feature type="chain" id="PRO_0000122309" description="5-methylthioadenosine/S-adenosylhomocysteine deaminase 2">
    <location>
        <begin position="1"/>
        <end position="416"/>
    </location>
</feature>
<feature type="binding site" evidence="1">
    <location>
        <position position="58"/>
    </location>
    <ligand>
        <name>Zn(2+)</name>
        <dbReference type="ChEBI" id="CHEBI:29105"/>
    </ligand>
</feature>
<feature type="binding site" evidence="1">
    <location>
        <position position="60"/>
    </location>
    <ligand>
        <name>Zn(2+)</name>
        <dbReference type="ChEBI" id="CHEBI:29105"/>
    </ligand>
</feature>
<feature type="binding site" evidence="1">
    <location>
        <position position="86"/>
    </location>
    <ligand>
        <name>substrate</name>
    </ligand>
</feature>
<feature type="binding site" evidence="1">
    <location>
        <position position="178"/>
    </location>
    <ligand>
        <name>substrate</name>
    </ligand>
</feature>
<feature type="binding site" evidence="1">
    <location>
        <position position="205"/>
    </location>
    <ligand>
        <name>Zn(2+)</name>
        <dbReference type="ChEBI" id="CHEBI:29105"/>
    </ligand>
</feature>
<feature type="binding site" evidence="1">
    <location>
        <position position="208"/>
    </location>
    <ligand>
        <name>substrate</name>
    </ligand>
</feature>
<feature type="binding site" evidence="1">
    <location>
        <position position="293"/>
    </location>
    <ligand>
        <name>substrate</name>
    </ligand>
</feature>
<feature type="binding site" evidence="1">
    <location>
        <position position="293"/>
    </location>
    <ligand>
        <name>Zn(2+)</name>
        <dbReference type="ChEBI" id="CHEBI:29105"/>
    </ligand>
</feature>
<sequence length="416" mass="45487">MHDLVIRNGLCFINGEFVECSVGVDGNRITHVAKEVERGEIEIDAAGCLVMPGCFNAHTHAAMTLLRGYAEGLPLREWLEKVWEVEARLDEDAVYWGTMLACVEMLKSGVTAFADMYIHMDAVAEAVGESGMRAVLGYGMADRGDEERARKELEIGLEFAEKWNGGFEGRVTTMLAPHAPYTCSPEFLKVVSDASKDKGFLKHIHVSETLWEVKEVRERYGKRPVEFLDSIGFLDSSTVLAHAVWLSEAEMKILAERGVSVAHCPTSNLKLSSGIAKVSELLEMGVNVGIGTDGAASNNMLSVLSDARVGALLQNLRGRTLKPGHWLEMATEGGYRAYNLKGGRIEEGYLADIVVFSKTCRNAPMHDPAAMLYVENQALHAVVDGVLVMEDGILVNVEEEKVIEKAEETALELVGG</sequence>
<keyword id="KW-0378">Hydrolase</keyword>
<keyword id="KW-0479">Metal-binding</keyword>
<keyword id="KW-1185">Reference proteome</keyword>
<keyword id="KW-0862">Zinc</keyword>
<evidence type="ECO:0000255" key="1">
    <source>
        <dbReference type="HAMAP-Rule" id="MF_01281"/>
    </source>
</evidence>
<accession>O29265</accession>
<protein>
    <recommendedName>
        <fullName evidence="1">5-methylthioadenosine/S-adenosylhomocysteine deaminase 2</fullName>
        <shortName evidence="1">MTA/SAH deaminase 2</shortName>
        <ecNumber evidence="1">3.5.4.28</ecNumber>
        <ecNumber evidence="1">3.5.4.31</ecNumber>
    </recommendedName>
</protein>